<sequence length="153" mass="16458">MNFEGKLVGKDLKIAIVVSRFNDFITTRLLEGAKDTLIRHEVEDTNIDVAYVPGAFEIPLVAKKLAQKGEYDAVITLGCVIRGATSHYDYVCNEVAKGVSKANDISDTPVIFGVLTTESIEQAVERAGTKAGNKGSEAAVSAIEMANLIKQIN</sequence>
<name>RISB_STAES</name>
<reference key="1">
    <citation type="journal article" date="2003" name="Mol. Microbiol.">
        <title>Genome-based analysis of virulence genes in a non-biofilm-forming Staphylococcus epidermidis strain (ATCC 12228).</title>
        <authorList>
            <person name="Zhang Y.-Q."/>
            <person name="Ren S.-X."/>
            <person name="Li H.-L."/>
            <person name="Wang Y.-X."/>
            <person name="Fu G."/>
            <person name="Yang J."/>
            <person name="Qin Z.-Q."/>
            <person name="Miao Y.-G."/>
            <person name="Wang W.-Y."/>
            <person name="Chen R.-S."/>
            <person name="Shen Y."/>
            <person name="Chen Z."/>
            <person name="Yuan Z.-H."/>
            <person name="Zhao G.-P."/>
            <person name="Qu D."/>
            <person name="Danchin A."/>
            <person name="Wen Y.-M."/>
        </authorList>
    </citation>
    <scope>NUCLEOTIDE SEQUENCE [LARGE SCALE GENOMIC DNA]</scope>
    <source>
        <strain>ATCC 12228 / FDA PCI 1200</strain>
    </source>
</reference>
<dbReference type="EC" id="2.5.1.78" evidence="1"/>
<dbReference type="EMBL" id="AE015929">
    <property type="protein sequence ID" value="AAO05037.1"/>
    <property type="molecule type" value="Genomic_DNA"/>
</dbReference>
<dbReference type="RefSeq" id="NP_764993.1">
    <property type="nucleotide sequence ID" value="NC_004461.1"/>
</dbReference>
<dbReference type="SMR" id="Q8CNU3"/>
<dbReference type="KEGG" id="sep:SE_1438"/>
<dbReference type="PATRIC" id="fig|176280.10.peg.1404"/>
<dbReference type="eggNOG" id="COG0054">
    <property type="taxonomic scope" value="Bacteria"/>
</dbReference>
<dbReference type="HOGENOM" id="CLU_089358_1_1_9"/>
<dbReference type="OrthoDB" id="9809709at2"/>
<dbReference type="UniPathway" id="UPA00275">
    <property type="reaction ID" value="UER00404"/>
</dbReference>
<dbReference type="Proteomes" id="UP000001411">
    <property type="component" value="Chromosome"/>
</dbReference>
<dbReference type="GO" id="GO:0005829">
    <property type="term" value="C:cytosol"/>
    <property type="evidence" value="ECO:0007669"/>
    <property type="project" value="TreeGrafter"/>
</dbReference>
<dbReference type="GO" id="GO:0009349">
    <property type="term" value="C:riboflavin synthase complex"/>
    <property type="evidence" value="ECO:0007669"/>
    <property type="project" value="InterPro"/>
</dbReference>
<dbReference type="GO" id="GO:0000906">
    <property type="term" value="F:6,7-dimethyl-8-ribityllumazine synthase activity"/>
    <property type="evidence" value="ECO:0007669"/>
    <property type="project" value="UniProtKB-UniRule"/>
</dbReference>
<dbReference type="GO" id="GO:0009231">
    <property type="term" value="P:riboflavin biosynthetic process"/>
    <property type="evidence" value="ECO:0007669"/>
    <property type="project" value="UniProtKB-UniRule"/>
</dbReference>
<dbReference type="CDD" id="cd09209">
    <property type="entry name" value="Lumazine_synthase-I"/>
    <property type="match status" value="1"/>
</dbReference>
<dbReference type="FunFam" id="3.40.50.960:FF:000001">
    <property type="entry name" value="6,7-dimethyl-8-ribityllumazine synthase"/>
    <property type="match status" value="1"/>
</dbReference>
<dbReference type="Gene3D" id="3.40.50.960">
    <property type="entry name" value="Lumazine/riboflavin synthase"/>
    <property type="match status" value="1"/>
</dbReference>
<dbReference type="HAMAP" id="MF_00178">
    <property type="entry name" value="Lumazine_synth"/>
    <property type="match status" value="1"/>
</dbReference>
<dbReference type="InterPro" id="IPR034964">
    <property type="entry name" value="LS"/>
</dbReference>
<dbReference type="InterPro" id="IPR002180">
    <property type="entry name" value="LS/RS"/>
</dbReference>
<dbReference type="InterPro" id="IPR036467">
    <property type="entry name" value="LS/RS_sf"/>
</dbReference>
<dbReference type="NCBIfam" id="TIGR00114">
    <property type="entry name" value="lumazine-synth"/>
    <property type="match status" value="1"/>
</dbReference>
<dbReference type="NCBIfam" id="NF000812">
    <property type="entry name" value="PRK00061.1-4"/>
    <property type="match status" value="1"/>
</dbReference>
<dbReference type="PANTHER" id="PTHR21058:SF0">
    <property type="entry name" value="6,7-DIMETHYL-8-RIBITYLLUMAZINE SYNTHASE"/>
    <property type="match status" value="1"/>
</dbReference>
<dbReference type="PANTHER" id="PTHR21058">
    <property type="entry name" value="6,7-DIMETHYL-8-RIBITYLLUMAZINE SYNTHASE DMRL SYNTHASE LUMAZINE SYNTHASE"/>
    <property type="match status" value="1"/>
</dbReference>
<dbReference type="Pfam" id="PF00885">
    <property type="entry name" value="DMRL_synthase"/>
    <property type="match status" value="1"/>
</dbReference>
<dbReference type="SUPFAM" id="SSF52121">
    <property type="entry name" value="Lumazine synthase"/>
    <property type="match status" value="1"/>
</dbReference>
<keyword id="KW-0686">Riboflavin biosynthesis</keyword>
<keyword id="KW-0808">Transferase</keyword>
<proteinExistence type="inferred from homology"/>
<organism>
    <name type="scientific">Staphylococcus epidermidis (strain ATCC 12228 / FDA PCI 1200)</name>
    <dbReference type="NCBI Taxonomy" id="176280"/>
    <lineage>
        <taxon>Bacteria</taxon>
        <taxon>Bacillati</taxon>
        <taxon>Bacillota</taxon>
        <taxon>Bacilli</taxon>
        <taxon>Bacillales</taxon>
        <taxon>Staphylococcaceae</taxon>
        <taxon>Staphylococcus</taxon>
    </lineage>
</organism>
<gene>
    <name evidence="1" type="primary">ribH</name>
    <name type="ordered locus">SE_1438</name>
</gene>
<evidence type="ECO:0000255" key="1">
    <source>
        <dbReference type="HAMAP-Rule" id="MF_00178"/>
    </source>
</evidence>
<accession>Q8CNU3</accession>
<feature type="chain" id="PRO_0000134811" description="6,7-dimethyl-8-ribityllumazine synthase">
    <location>
        <begin position="1"/>
        <end position="153"/>
    </location>
</feature>
<feature type="active site" description="Proton donor" evidence="1">
    <location>
        <position position="87"/>
    </location>
</feature>
<feature type="binding site" evidence="1">
    <location>
        <position position="21"/>
    </location>
    <ligand>
        <name>5-amino-6-(D-ribitylamino)uracil</name>
        <dbReference type="ChEBI" id="CHEBI:15934"/>
    </ligand>
</feature>
<feature type="binding site" evidence="1">
    <location>
        <begin position="55"/>
        <end position="57"/>
    </location>
    <ligand>
        <name>5-amino-6-(D-ribitylamino)uracil</name>
        <dbReference type="ChEBI" id="CHEBI:15934"/>
    </ligand>
</feature>
<feature type="binding site" evidence="1">
    <location>
        <begin position="79"/>
        <end position="81"/>
    </location>
    <ligand>
        <name>5-amino-6-(D-ribitylamino)uracil</name>
        <dbReference type="ChEBI" id="CHEBI:15934"/>
    </ligand>
</feature>
<feature type="binding site" evidence="1">
    <location>
        <begin position="84"/>
        <end position="85"/>
    </location>
    <ligand>
        <name>(2S)-2-hydroxy-3-oxobutyl phosphate</name>
        <dbReference type="ChEBI" id="CHEBI:58830"/>
    </ligand>
</feature>
<feature type="binding site" evidence="1">
    <location>
        <position position="112"/>
    </location>
    <ligand>
        <name>5-amino-6-(D-ribitylamino)uracil</name>
        <dbReference type="ChEBI" id="CHEBI:15934"/>
    </ligand>
</feature>
<feature type="binding site" evidence="1">
    <location>
        <position position="126"/>
    </location>
    <ligand>
        <name>(2S)-2-hydroxy-3-oxobutyl phosphate</name>
        <dbReference type="ChEBI" id="CHEBI:58830"/>
    </ligand>
</feature>
<protein>
    <recommendedName>
        <fullName evidence="1">6,7-dimethyl-8-ribityllumazine synthase</fullName>
        <shortName evidence="1">DMRL synthase</shortName>
        <shortName evidence="1">LS</shortName>
        <shortName evidence="1">Lumazine synthase</shortName>
        <ecNumber evidence="1">2.5.1.78</ecNumber>
    </recommendedName>
</protein>
<comment type="function">
    <text evidence="1">Catalyzes the formation of 6,7-dimethyl-8-ribityllumazine by condensation of 5-amino-6-(D-ribitylamino)uracil with 3,4-dihydroxy-2-butanone 4-phosphate. This is the penultimate step in the biosynthesis of riboflavin.</text>
</comment>
<comment type="catalytic activity">
    <reaction evidence="1">
        <text>(2S)-2-hydroxy-3-oxobutyl phosphate + 5-amino-6-(D-ribitylamino)uracil = 6,7-dimethyl-8-(1-D-ribityl)lumazine + phosphate + 2 H2O + H(+)</text>
        <dbReference type="Rhea" id="RHEA:26152"/>
        <dbReference type="ChEBI" id="CHEBI:15377"/>
        <dbReference type="ChEBI" id="CHEBI:15378"/>
        <dbReference type="ChEBI" id="CHEBI:15934"/>
        <dbReference type="ChEBI" id="CHEBI:43474"/>
        <dbReference type="ChEBI" id="CHEBI:58201"/>
        <dbReference type="ChEBI" id="CHEBI:58830"/>
        <dbReference type="EC" id="2.5.1.78"/>
    </reaction>
</comment>
<comment type="pathway">
    <text evidence="1">Cofactor biosynthesis; riboflavin biosynthesis; riboflavin from 2-hydroxy-3-oxobutyl phosphate and 5-amino-6-(D-ribitylamino)uracil: step 1/2.</text>
</comment>
<comment type="subunit">
    <text evidence="1">Forms an icosahedral capsid composed of 60 subunits, arranged as a dodecamer of pentamers.</text>
</comment>
<comment type="similarity">
    <text evidence="1">Belongs to the DMRL synthase family.</text>
</comment>